<name>Y396_CLOBJ</name>
<organism>
    <name type="scientific">Clostridium botulinum (strain Kyoto / Type A2)</name>
    <dbReference type="NCBI Taxonomy" id="536232"/>
    <lineage>
        <taxon>Bacteria</taxon>
        <taxon>Bacillati</taxon>
        <taxon>Bacillota</taxon>
        <taxon>Clostridia</taxon>
        <taxon>Eubacteriales</taxon>
        <taxon>Clostridiaceae</taxon>
        <taxon>Clostridium</taxon>
    </lineage>
</organism>
<protein>
    <recommendedName>
        <fullName evidence="1">UPF0371 protein CLM_0396</fullName>
    </recommendedName>
</protein>
<accession>C1FRL0</accession>
<sequence>MRIGFDHEKYLEEQSKYILERVNNYDKLYLEFGGKLLFDLHAKRVLPGFDENAKIKLLHKLKEKVEIIICLYAGDIERNKIRGDFGITYDVDVLRLIDDLRGYDLEVNSVVITRYSGQPATNIFINKLERRGIKVYKHEATKGYPTDVDTIVSDEGYGKNPYIETTKPIVVVTAPGPGSGKLATCLSQLYHEYKRGNVAGYSKFETFPVWNVPLKHPLNIAYESATVDLKDVNMIDSFHFDAYNKVAVNYNRDIESFPVLKRIIEKITGEESVYKSPTDMGVNRVGFGIVDDEIVKEASKQEIIRRAFKTACEYKKGYVDKETFHRAKLIMEEMNLKEEDRKVVIPAREYAAKLKERANKSETCTVVALELEDGTILTGRSSELMDGTAAVILNAVKHYANISDEIHLISPVILEPIINLKAKTLGSKRTALSCEEVLIALSICAATNPTAQVAMGKLPMLKGCQAHSTTILSTNEEQTFRKLGIDVTCDPEYISESLYYNN</sequence>
<gene>
    <name type="ordered locus">CLM_0396</name>
</gene>
<proteinExistence type="inferred from homology"/>
<dbReference type="EMBL" id="CP001581">
    <property type="protein sequence ID" value="ACO86716.1"/>
    <property type="molecule type" value="Genomic_DNA"/>
</dbReference>
<dbReference type="RefSeq" id="WP_003357216.1">
    <property type="nucleotide sequence ID" value="NC_012563.1"/>
</dbReference>
<dbReference type="SMR" id="C1FRL0"/>
<dbReference type="KEGG" id="cby:CLM_0396"/>
<dbReference type="eggNOG" id="COG4868">
    <property type="taxonomic scope" value="Bacteria"/>
</dbReference>
<dbReference type="HOGENOM" id="CLU_046981_0_0_9"/>
<dbReference type="Proteomes" id="UP000001374">
    <property type="component" value="Chromosome"/>
</dbReference>
<dbReference type="Gene3D" id="1.20.1570.10">
    <property type="entry name" value="dip2346 domain like"/>
    <property type="match status" value="1"/>
</dbReference>
<dbReference type="Gene3D" id="3.10.630.10">
    <property type="entry name" value="dip2346 domain like"/>
    <property type="match status" value="1"/>
</dbReference>
<dbReference type="Gene3D" id="3.40.140.40">
    <property type="entry name" value="Domain of unknown function (DUF1846), C-terminal subdomain"/>
    <property type="match status" value="1"/>
</dbReference>
<dbReference type="HAMAP" id="MF_01567">
    <property type="entry name" value="UPF0371"/>
    <property type="match status" value="1"/>
</dbReference>
<dbReference type="InterPro" id="IPR014999">
    <property type="entry name" value="DUF1846"/>
</dbReference>
<dbReference type="InterPro" id="IPR048441">
    <property type="entry name" value="DUF1846_C"/>
</dbReference>
<dbReference type="InterPro" id="IPR048496">
    <property type="entry name" value="DUF1846_N"/>
</dbReference>
<dbReference type="NCBIfam" id="NF010184">
    <property type="entry name" value="PRK13663.1"/>
    <property type="match status" value="1"/>
</dbReference>
<dbReference type="Pfam" id="PF08903">
    <property type="entry name" value="DUF1846"/>
    <property type="match status" value="1"/>
</dbReference>
<dbReference type="Pfam" id="PF20921">
    <property type="entry name" value="DUF1846_C"/>
    <property type="match status" value="1"/>
</dbReference>
<dbReference type="PIRSF" id="PIRSF033132">
    <property type="entry name" value="DUF1846"/>
    <property type="match status" value="1"/>
</dbReference>
<feature type="chain" id="PRO_1000185459" description="UPF0371 protein CLM_0396">
    <location>
        <begin position="1"/>
        <end position="502"/>
    </location>
</feature>
<reference key="1">
    <citation type="submission" date="2008-10" db="EMBL/GenBank/DDBJ databases">
        <title>Genome sequence of Clostridium botulinum A2 Kyoto.</title>
        <authorList>
            <person name="Shrivastava S."/>
            <person name="Brinkac L.M."/>
            <person name="Brown J.L."/>
            <person name="Bruce D."/>
            <person name="Detter C.C."/>
            <person name="Johnson E.A."/>
            <person name="Munk C.A."/>
            <person name="Smith L.A."/>
            <person name="Smith T.J."/>
            <person name="Sutton G."/>
            <person name="Brettin T.S."/>
        </authorList>
    </citation>
    <scope>NUCLEOTIDE SEQUENCE [LARGE SCALE GENOMIC DNA]</scope>
    <source>
        <strain>Kyoto / Type A2</strain>
    </source>
</reference>
<comment type="similarity">
    <text evidence="1">Belongs to the UPF0371 family.</text>
</comment>
<evidence type="ECO:0000255" key="1">
    <source>
        <dbReference type="HAMAP-Rule" id="MF_01567"/>
    </source>
</evidence>